<dbReference type="EMBL" id="X05681">
    <property type="protein sequence ID" value="CAA29168.1"/>
    <property type="status" value="ALT_TERM"/>
    <property type="molecule type" value="Genomic_DNA"/>
</dbReference>
<dbReference type="EMBL" id="L47838">
    <property type="protein sequence ID" value="AAB38470.1"/>
    <property type="molecule type" value="Genomic_DNA"/>
</dbReference>
<dbReference type="EMBL" id="AL009126">
    <property type="protein sequence ID" value="CAB14137.1"/>
    <property type="molecule type" value="Genomic_DNA"/>
</dbReference>
<dbReference type="PIR" id="D27393">
    <property type="entry name" value="D27393"/>
</dbReference>
<dbReference type="RefSeq" id="NP_390102.1">
    <property type="nucleotide sequence ID" value="NC_000964.3"/>
</dbReference>
<dbReference type="RefSeq" id="WP_010886551.1">
    <property type="nucleotide sequence ID" value="NZ_OZ025638.1"/>
</dbReference>
<dbReference type="FunCoup" id="P07791">
    <property type="interactions" value="14"/>
</dbReference>
<dbReference type="STRING" id="224308.BSU22200"/>
<dbReference type="PaxDb" id="224308-BSU22200"/>
<dbReference type="EnsemblBacteria" id="CAB14137">
    <property type="protein sequence ID" value="CAB14137"/>
    <property type="gene ID" value="BSU_22200"/>
</dbReference>
<dbReference type="GeneID" id="939051"/>
<dbReference type="KEGG" id="bsu:BSU22200"/>
<dbReference type="PATRIC" id="fig|224308.43.peg.2314"/>
<dbReference type="eggNOG" id="ENOG503315V">
    <property type="taxonomic scope" value="Bacteria"/>
</dbReference>
<dbReference type="InParanoid" id="P07791"/>
<dbReference type="OrthoDB" id="2455195at2"/>
<dbReference type="BioCyc" id="BSUB:BSU22200-MONOMER"/>
<dbReference type="Proteomes" id="UP000001570">
    <property type="component" value="Chromosome"/>
</dbReference>
<dbReference type="GO" id="GO:0030435">
    <property type="term" value="P:sporulation resulting in formation of a cellular spore"/>
    <property type="evidence" value="ECO:0007669"/>
    <property type="project" value="UniProtKB-KW"/>
</dbReference>
<dbReference type="InterPro" id="IPR020108">
    <property type="entry name" value="Spore_coat_CotD"/>
</dbReference>
<dbReference type="Pfam" id="PF11122">
    <property type="entry name" value="Spore-coat_CotD"/>
    <property type="match status" value="1"/>
</dbReference>
<accession>P07791</accession>
<reference key="1">
    <citation type="journal article" date="1987" name="J. Mol. Biol.">
        <title>Genes encoding spore coat polypeptides from Bacillus subtilis.</title>
        <authorList>
            <person name="Donovan W."/>
            <person name="Zheng L."/>
            <person name="Sandman K."/>
            <person name="Losick R."/>
        </authorList>
    </citation>
    <scope>NUCLEOTIDE SEQUENCE [GENOMIC DNA]</scope>
</reference>
<reference key="2">
    <citation type="journal article" date="1996" name="Microbiology">
        <title>Sequence analysis of the Bacillus subtilis chromosome region between the serA and kdg loci cloned in a yeast artificial chromosome.</title>
        <authorList>
            <person name="Sorokin A.V."/>
            <person name="Azevedo V."/>
            <person name="Zumstein E."/>
            <person name="Galleron N."/>
            <person name="Ehrlich S.D."/>
            <person name="Serror P."/>
        </authorList>
    </citation>
    <scope>NUCLEOTIDE SEQUENCE [GENOMIC DNA]</scope>
    <source>
        <strain>168 / Marburg / ATCC 6051 / DSM 10 / JCM 1465 / NBRC 13719 / NCIMB 3610 / NRRL NRS-744 / VKM B-501</strain>
    </source>
</reference>
<reference key="3">
    <citation type="journal article" date="1997" name="Nature">
        <title>The complete genome sequence of the Gram-positive bacterium Bacillus subtilis.</title>
        <authorList>
            <person name="Kunst F."/>
            <person name="Ogasawara N."/>
            <person name="Moszer I."/>
            <person name="Albertini A.M."/>
            <person name="Alloni G."/>
            <person name="Azevedo V."/>
            <person name="Bertero M.G."/>
            <person name="Bessieres P."/>
            <person name="Bolotin A."/>
            <person name="Borchert S."/>
            <person name="Borriss R."/>
            <person name="Boursier L."/>
            <person name="Brans A."/>
            <person name="Braun M."/>
            <person name="Brignell S.C."/>
            <person name="Bron S."/>
            <person name="Brouillet S."/>
            <person name="Bruschi C.V."/>
            <person name="Caldwell B."/>
            <person name="Capuano V."/>
            <person name="Carter N.M."/>
            <person name="Choi S.-K."/>
            <person name="Codani J.-J."/>
            <person name="Connerton I.F."/>
            <person name="Cummings N.J."/>
            <person name="Daniel R.A."/>
            <person name="Denizot F."/>
            <person name="Devine K.M."/>
            <person name="Duesterhoeft A."/>
            <person name="Ehrlich S.D."/>
            <person name="Emmerson P.T."/>
            <person name="Entian K.-D."/>
            <person name="Errington J."/>
            <person name="Fabret C."/>
            <person name="Ferrari E."/>
            <person name="Foulger D."/>
            <person name="Fritz C."/>
            <person name="Fujita M."/>
            <person name="Fujita Y."/>
            <person name="Fuma S."/>
            <person name="Galizzi A."/>
            <person name="Galleron N."/>
            <person name="Ghim S.-Y."/>
            <person name="Glaser P."/>
            <person name="Goffeau A."/>
            <person name="Golightly E.J."/>
            <person name="Grandi G."/>
            <person name="Guiseppi G."/>
            <person name="Guy B.J."/>
            <person name="Haga K."/>
            <person name="Haiech J."/>
            <person name="Harwood C.R."/>
            <person name="Henaut A."/>
            <person name="Hilbert H."/>
            <person name="Holsappel S."/>
            <person name="Hosono S."/>
            <person name="Hullo M.-F."/>
            <person name="Itaya M."/>
            <person name="Jones L.-M."/>
            <person name="Joris B."/>
            <person name="Karamata D."/>
            <person name="Kasahara Y."/>
            <person name="Klaerr-Blanchard M."/>
            <person name="Klein C."/>
            <person name="Kobayashi Y."/>
            <person name="Koetter P."/>
            <person name="Koningstein G."/>
            <person name="Krogh S."/>
            <person name="Kumano M."/>
            <person name="Kurita K."/>
            <person name="Lapidus A."/>
            <person name="Lardinois S."/>
            <person name="Lauber J."/>
            <person name="Lazarevic V."/>
            <person name="Lee S.-M."/>
            <person name="Levine A."/>
            <person name="Liu H."/>
            <person name="Masuda S."/>
            <person name="Mauel C."/>
            <person name="Medigue C."/>
            <person name="Medina N."/>
            <person name="Mellado R.P."/>
            <person name="Mizuno M."/>
            <person name="Moestl D."/>
            <person name="Nakai S."/>
            <person name="Noback M."/>
            <person name="Noone D."/>
            <person name="O'Reilly M."/>
            <person name="Ogawa K."/>
            <person name="Ogiwara A."/>
            <person name="Oudega B."/>
            <person name="Park S.-H."/>
            <person name="Parro V."/>
            <person name="Pohl T.M."/>
            <person name="Portetelle D."/>
            <person name="Porwollik S."/>
            <person name="Prescott A.M."/>
            <person name="Presecan E."/>
            <person name="Pujic P."/>
            <person name="Purnelle B."/>
            <person name="Rapoport G."/>
            <person name="Rey M."/>
            <person name="Reynolds S."/>
            <person name="Rieger M."/>
            <person name="Rivolta C."/>
            <person name="Rocha E."/>
            <person name="Roche B."/>
            <person name="Rose M."/>
            <person name="Sadaie Y."/>
            <person name="Sato T."/>
            <person name="Scanlan E."/>
            <person name="Schleich S."/>
            <person name="Schroeter R."/>
            <person name="Scoffone F."/>
            <person name="Sekiguchi J."/>
            <person name="Sekowska A."/>
            <person name="Seror S.J."/>
            <person name="Serror P."/>
            <person name="Shin B.-S."/>
            <person name="Soldo B."/>
            <person name="Sorokin A."/>
            <person name="Tacconi E."/>
            <person name="Takagi T."/>
            <person name="Takahashi H."/>
            <person name="Takemaru K."/>
            <person name="Takeuchi M."/>
            <person name="Tamakoshi A."/>
            <person name="Tanaka T."/>
            <person name="Terpstra P."/>
            <person name="Tognoni A."/>
            <person name="Tosato V."/>
            <person name="Uchiyama S."/>
            <person name="Vandenbol M."/>
            <person name="Vannier F."/>
            <person name="Vassarotti A."/>
            <person name="Viari A."/>
            <person name="Wambutt R."/>
            <person name="Wedler E."/>
            <person name="Wedler H."/>
            <person name="Weitzenegger T."/>
            <person name="Winters P."/>
            <person name="Wipat A."/>
            <person name="Yamamoto H."/>
            <person name="Yamane K."/>
            <person name="Yasumoto K."/>
            <person name="Yata K."/>
            <person name="Yoshida K."/>
            <person name="Yoshikawa H.-F."/>
            <person name="Zumstein E."/>
            <person name="Yoshikawa H."/>
            <person name="Danchin A."/>
        </authorList>
    </citation>
    <scope>NUCLEOTIDE SEQUENCE [LARGE SCALE GENOMIC DNA]</scope>
    <source>
        <strain>168</strain>
    </source>
</reference>
<reference key="4">
    <citation type="journal article" date="1990" name="J. Mol. Biol.">
        <title>Cascade regulation of spore coat gene expression in Bacillus subtilis.</title>
        <authorList>
            <person name="Zheng L."/>
            <person name="Losick R."/>
        </authorList>
    </citation>
    <scope>NUCLEOTIDE SEQUENCE [GENOMIC DNA] OF 1-6</scope>
</reference>
<proteinExistence type="predicted"/>
<name>COTD_BACSU</name>
<feature type="chain" id="PRO_0000079260" description="Spore coat protein D">
    <location>
        <begin position="1"/>
        <end position="75"/>
    </location>
</feature>
<gene>
    <name type="primary">cotD</name>
    <name type="ordered locus">BSU22200</name>
</gene>
<organism>
    <name type="scientific">Bacillus subtilis (strain 168)</name>
    <dbReference type="NCBI Taxonomy" id="224308"/>
    <lineage>
        <taxon>Bacteria</taxon>
        <taxon>Bacillati</taxon>
        <taxon>Bacillota</taxon>
        <taxon>Bacilli</taxon>
        <taxon>Bacillales</taxon>
        <taxon>Bacillaceae</taxon>
        <taxon>Bacillus</taxon>
    </lineage>
</organism>
<protein>
    <recommendedName>
        <fullName>Spore coat protein D</fullName>
    </recommendedName>
</protein>
<keyword id="KW-1185">Reference proteome</keyword>
<keyword id="KW-0749">Sporulation</keyword>
<sequence length="75" mass="8840">MHHCRPHMMAPIVHPTHCCEHHTFSKTIVPHIHPQHTTNVNHQHFQHVHYFPHTFSNVDPATHQHFQAGKPCCDY</sequence>